<protein>
    <recommendedName>
        <fullName evidence="1">Bifunctional protein GlmU</fullName>
    </recommendedName>
    <domain>
        <recommendedName>
            <fullName evidence="1">UDP-N-acetylglucosamine pyrophosphorylase</fullName>
            <ecNumber evidence="1">2.7.7.23</ecNumber>
        </recommendedName>
        <alternativeName>
            <fullName evidence="1">N-acetylglucosamine-1-phosphate uridyltransferase</fullName>
        </alternativeName>
    </domain>
    <domain>
        <recommendedName>
            <fullName evidence="1">Glucosamine-1-phosphate N-acetyltransferase</fullName>
            <ecNumber evidence="1">2.3.1.157</ecNumber>
        </recommendedName>
    </domain>
</protein>
<feature type="chain" id="PRO_1000056174" description="Bifunctional protein GlmU">
    <location>
        <begin position="1"/>
        <end position="497"/>
    </location>
</feature>
<feature type="region of interest" description="Pyrophosphorylase" evidence="1">
    <location>
        <begin position="1"/>
        <end position="243"/>
    </location>
</feature>
<feature type="region of interest" description="Linker" evidence="1">
    <location>
        <begin position="244"/>
        <end position="264"/>
    </location>
</feature>
<feature type="region of interest" description="N-acetyltransferase" evidence="1">
    <location>
        <begin position="265"/>
        <end position="497"/>
    </location>
</feature>
<feature type="region of interest" description="Disordered" evidence="2">
    <location>
        <begin position="473"/>
        <end position="497"/>
    </location>
</feature>
<feature type="compositionally biased region" description="Basic and acidic residues" evidence="2">
    <location>
        <begin position="488"/>
        <end position="497"/>
    </location>
</feature>
<feature type="active site" description="Proton acceptor" evidence="1">
    <location>
        <position position="376"/>
    </location>
</feature>
<feature type="binding site" evidence="1">
    <location>
        <begin position="16"/>
        <end position="19"/>
    </location>
    <ligand>
        <name>UDP-N-acetyl-alpha-D-glucosamine</name>
        <dbReference type="ChEBI" id="CHEBI:57705"/>
    </ligand>
</feature>
<feature type="binding site" evidence="1">
    <location>
        <position position="30"/>
    </location>
    <ligand>
        <name>UDP-N-acetyl-alpha-D-glucosamine</name>
        <dbReference type="ChEBI" id="CHEBI:57705"/>
    </ligand>
</feature>
<feature type="binding site" evidence="1">
    <location>
        <position position="87"/>
    </location>
    <ligand>
        <name>UDP-N-acetyl-alpha-D-glucosamine</name>
        <dbReference type="ChEBI" id="CHEBI:57705"/>
    </ligand>
</feature>
<feature type="binding site" evidence="1">
    <location>
        <begin position="92"/>
        <end position="93"/>
    </location>
    <ligand>
        <name>UDP-N-acetyl-alpha-D-glucosamine</name>
        <dbReference type="ChEBI" id="CHEBI:57705"/>
    </ligand>
</feature>
<feature type="binding site" evidence="1">
    <location>
        <position position="118"/>
    </location>
    <ligand>
        <name>Mg(2+)</name>
        <dbReference type="ChEBI" id="CHEBI:18420"/>
    </ligand>
</feature>
<feature type="binding site" evidence="1">
    <location>
        <position position="153"/>
    </location>
    <ligand>
        <name>UDP-N-acetyl-alpha-D-glucosamine</name>
        <dbReference type="ChEBI" id="CHEBI:57705"/>
    </ligand>
</feature>
<feature type="binding site" evidence="1">
    <location>
        <position position="168"/>
    </location>
    <ligand>
        <name>UDP-N-acetyl-alpha-D-glucosamine</name>
        <dbReference type="ChEBI" id="CHEBI:57705"/>
    </ligand>
</feature>
<feature type="binding site" evidence="1">
    <location>
        <position position="183"/>
    </location>
    <ligand>
        <name>UDP-N-acetyl-alpha-D-glucosamine</name>
        <dbReference type="ChEBI" id="CHEBI:57705"/>
    </ligand>
</feature>
<feature type="binding site" evidence="1">
    <location>
        <position position="241"/>
    </location>
    <ligand>
        <name>Mg(2+)</name>
        <dbReference type="ChEBI" id="CHEBI:18420"/>
    </ligand>
</feature>
<feature type="binding site" evidence="1">
    <location>
        <position position="241"/>
    </location>
    <ligand>
        <name>UDP-N-acetyl-alpha-D-glucosamine</name>
        <dbReference type="ChEBI" id="CHEBI:57705"/>
    </ligand>
</feature>
<feature type="binding site" evidence="1">
    <location>
        <position position="346"/>
    </location>
    <ligand>
        <name>UDP-N-acetyl-alpha-D-glucosamine</name>
        <dbReference type="ChEBI" id="CHEBI:57705"/>
    </ligand>
</feature>
<feature type="binding site" evidence="1">
    <location>
        <position position="364"/>
    </location>
    <ligand>
        <name>UDP-N-acetyl-alpha-D-glucosamine</name>
        <dbReference type="ChEBI" id="CHEBI:57705"/>
    </ligand>
</feature>
<feature type="binding site" evidence="1">
    <location>
        <position position="379"/>
    </location>
    <ligand>
        <name>UDP-N-acetyl-alpha-D-glucosamine</name>
        <dbReference type="ChEBI" id="CHEBI:57705"/>
    </ligand>
</feature>
<feature type="binding site" evidence="1">
    <location>
        <position position="390"/>
    </location>
    <ligand>
        <name>UDP-N-acetyl-alpha-D-glucosamine</name>
        <dbReference type="ChEBI" id="CHEBI:57705"/>
    </ligand>
</feature>
<feature type="binding site" evidence="1">
    <location>
        <position position="393"/>
    </location>
    <ligand>
        <name>acetyl-CoA</name>
        <dbReference type="ChEBI" id="CHEBI:57288"/>
    </ligand>
</feature>
<feature type="binding site" evidence="1">
    <location>
        <begin position="399"/>
        <end position="400"/>
    </location>
    <ligand>
        <name>acetyl-CoA</name>
        <dbReference type="ChEBI" id="CHEBI:57288"/>
    </ligand>
</feature>
<feature type="binding site" evidence="1">
    <location>
        <position position="418"/>
    </location>
    <ligand>
        <name>acetyl-CoA</name>
        <dbReference type="ChEBI" id="CHEBI:57288"/>
    </ligand>
</feature>
<feature type="binding site" evidence="1">
    <location>
        <position position="436"/>
    </location>
    <ligand>
        <name>acetyl-CoA</name>
        <dbReference type="ChEBI" id="CHEBI:57288"/>
    </ligand>
</feature>
<keyword id="KW-0012">Acyltransferase</keyword>
<keyword id="KW-0133">Cell shape</keyword>
<keyword id="KW-0961">Cell wall biogenesis/degradation</keyword>
<keyword id="KW-0963">Cytoplasm</keyword>
<keyword id="KW-0460">Magnesium</keyword>
<keyword id="KW-0479">Metal-binding</keyword>
<keyword id="KW-0511">Multifunctional enzyme</keyword>
<keyword id="KW-0548">Nucleotidyltransferase</keyword>
<keyword id="KW-0573">Peptidoglycan synthesis</keyword>
<keyword id="KW-0677">Repeat</keyword>
<keyword id="KW-0808">Transferase</keyword>
<comment type="function">
    <text evidence="1">Catalyzes the last two sequential reactions in the de novo biosynthetic pathway for UDP-N-acetylglucosamine (UDP-GlcNAc). The C-terminal domain catalyzes the transfer of acetyl group from acetyl coenzyme A to glucosamine-1-phosphate (GlcN-1-P) to produce N-acetylglucosamine-1-phosphate (GlcNAc-1-P), which is converted into UDP-GlcNAc by the transfer of uridine 5-monophosphate (from uridine 5-triphosphate), a reaction catalyzed by the N-terminal domain.</text>
</comment>
<comment type="catalytic activity">
    <reaction evidence="1">
        <text>alpha-D-glucosamine 1-phosphate + acetyl-CoA = N-acetyl-alpha-D-glucosamine 1-phosphate + CoA + H(+)</text>
        <dbReference type="Rhea" id="RHEA:13725"/>
        <dbReference type="ChEBI" id="CHEBI:15378"/>
        <dbReference type="ChEBI" id="CHEBI:57287"/>
        <dbReference type="ChEBI" id="CHEBI:57288"/>
        <dbReference type="ChEBI" id="CHEBI:57776"/>
        <dbReference type="ChEBI" id="CHEBI:58516"/>
        <dbReference type="EC" id="2.3.1.157"/>
    </reaction>
</comment>
<comment type="catalytic activity">
    <reaction evidence="1">
        <text>N-acetyl-alpha-D-glucosamine 1-phosphate + UTP + H(+) = UDP-N-acetyl-alpha-D-glucosamine + diphosphate</text>
        <dbReference type="Rhea" id="RHEA:13509"/>
        <dbReference type="ChEBI" id="CHEBI:15378"/>
        <dbReference type="ChEBI" id="CHEBI:33019"/>
        <dbReference type="ChEBI" id="CHEBI:46398"/>
        <dbReference type="ChEBI" id="CHEBI:57705"/>
        <dbReference type="ChEBI" id="CHEBI:57776"/>
        <dbReference type="EC" id="2.7.7.23"/>
    </reaction>
</comment>
<comment type="cofactor">
    <cofactor evidence="1">
        <name>Mg(2+)</name>
        <dbReference type="ChEBI" id="CHEBI:18420"/>
    </cofactor>
    <text evidence="1">Binds 1 Mg(2+) ion per subunit.</text>
</comment>
<comment type="pathway">
    <text evidence="1">Nucleotide-sugar biosynthesis; UDP-N-acetyl-alpha-D-glucosamine biosynthesis; N-acetyl-alpha-D-glucosamine 1-phosphate from alpha-D-glucosamine 6-phosphate (route II): step 2/2.</text>
</comment>
<comment type="pathway">
    <text evidence="1">Nucleotide-sugar biosynthesis; UDP-N-acetyl-alpha-D-glucosamine biosynthesis; UDP-N-acetyl-alpha-D-glucosamine from N-acetyl-alpha-D-glucosamine 1-phosphate: step 1/1.</text>
</comment>
<comment type="pathway">
    <text evidence="1">Bacterial outer membrane biogenesis; LPS lipid A biosynthesis.</text>
</comment>
<comment type="subunit">
    <text evidence="1">Homotrimer.</text>
</comment>
<comment type="subcellular location">
    <subcellularLocation>
        <location evidence="1">Cytoplasm</location>
    </subcellularLocation>
</comment>
<comment type="similarity">
    <text evidence="1">In the N-terminal section; belongs to the N-acetylglucosamine-1-phosphate uridyltransferase family.</text>
</comment>
<comment type="similarity">
    <text evidence="1">In the C-terminal section; belongs to the transferase hexapeptide repeat family.</text>
</comment>
<organism>
    <name type="scientific">Mycobacterium sp. (strain KMS)</name>
    <dbReference type="NCBI Taxonomy" id="189918"/>
    <lineage>
        <taxon>Bacteria</taxon>
        <taxon>Bacillati</taxon>
        <taxon>Actinomycetota</taxon>
        <taxon>Actinomycetes</taxon>
        <taxon>Mycobacteriales</taxon>
        <taxon>Mycobacteriaceae</taxon>
        <taxon>Mycobacterium</taxon>
    </lineage>
</organism>
<proteinExistence type="inferred from homology"/>
<accession>A1UL17</accession>
<evidence type="ECO:0000255" key="1">
    <source>
        <dbReference type="HAMAP-Rule" id="MF_01631"/>
    </source>
</evidence>
<evidence type="ECO:0000256" key="2">
    <source>
        <dbReference type="SAM" id="MobiDB-lite"/>
    </source>
</evidence>
<sequence>MTSSTTSSTDTAVLVLAAGAGTRMRSDIPKVLHTLGGRSMLAHALHTVAKVAPQHLVVVLGHDRERIAPAVEALATDLGRPIDVAIQDQQLGTGHAAECGLAALPEDFTGVVVVTAGDVPLLDADTMADLLATHGSAAATVLTTTVDDPTGYGRILRTQDNEVTSIVEQADASPSQRAIREVNAGVYAFDITALRSALRRLRSDNAQHELYLTDVIAIFRQDGLSVRARHVDDSALVAGVNDRVQLAALGAELNRRIVTAHQRAGVTVIDPGSTWIDVDVTIGRDTVIRPGTQLLGRTRVGGRCDVGPDTTLSDVTVGDGASVVRTHGSESLIGAGATVGPFTYLRPGTALGAEGKLGAFVETKNATIGAGTKVPHLTYVGDADIGEHSNIGASSVFVNYDGETKNRTTIGSHVRTGSDTMFVAPVTVGDGAYTGAGTVIRRNVPPGALAVSAGSQRNIEGWVVRKRPGSAAARAAERASGEAAEQALGHHDDSQGS</sequence>
<reference key="1">
    <citation type="submission" date="2006-12" db="EMBL/GenBank/DDBJ databases">
        <title>Complete sequence of chromosome of Mycobacterium sp. KMS.</title>
        <authorList>
            <consortium name="US DOE Joint Genome Institute"/>
            <person name="Copeland A."/>
            <person name="Lucas S."/>
            <person name="Lapidus A."/>
            <person name="Barry K."/>
            <person name="Detter J.C."/>
            <person name="Glavina del Rio T."/>
            <person name="Hammon N."/>
            <person name="Israni S."/>
            <person name="Dalin E."/>
            <person name="Tice H."/>
            <person name="Pitluck S."/>
            <person name="Kiss H."/>
            <person name="Brettin T."/>
            <person name="Bruce D."/>
            <person name="Han C."/>
            <person name="Tapia R."/>
            <person name="Gilna P."/>
            <person name="Schmutz J."/>
            <person name="Larimer F."/>
            <person name="Land M."/>
            <person name="Hauser L."/>
            <person name="Kyrpides N."/>
            <person name="Mikhailova N."/>
            <person name="Miller C.D."/>
            <person name="Richardson P."/>
        </authorList>
    </citation>
    <scope>NUCLEOTIDE SEQUENCE [LARGE SCALE GENOMIC DNA]</scope>
    <source>
        <strain>KMS</strain>
    </source>
</reference>
<gene>
    <name evidence="1" type="primary">glmU</name>
    <name type="ordered locus">Mkms_4334</name>
</gene>
<dbReference type="EC" id="2.7.7.23" evidence="1"/>
<dbReference type="EC" id="2.3.1.157" evidence="1"/>
<dbReference type="EMBL" id="CP000518">
    <property type="protein sequence ID" value="ABL93525.1"/>
    <property type="molecule type" value="Genomic_DNA"/>
</dbReference>
<dbReference type="SMR" id="A1UL17"/>
<dbReference type="STRING" id="189918.Mkms_4334"/>
<dbReference type="KEGG" id="mkm:Mkms_4334"/>
<dbReference type="HOGENOM" id="CLU_029499_15_2_11"/>
<dbReference type="OrthoDB" id="9775031at2"/>
<dbReference type="UniPathway" id="UPA00113">
    <property type="reaction ID" value="UER00532"/>
</dbReference>
<dbReference type="UniPathway" id="UPA00113">
    <property type="reaction ID" value="UER00533"/>
</dbReference>
<dbReference type="UniPathway" id="UPA00973"/>
<dbReference type="GO" id="GO:0005737">
    <property type="term" value="C:cytoplasm"/>
    <property type="evidence" value="ECO:0007669"/>
    <property type="project" value="UniProtKB-SubCell"/>
</dbReference>
<dbReference type="GO" id="GO:0016020">
    <property type="term" value="C:membrane"/>
    <property type="evidence" value="ECO:0007669"/>
    <property type="project" value="GOC"/>
</dbReference>
<dbReference type="GO" id="GO:0019134">
    <property type="term" value="F:glucosamine-1-phosphate N-acetyltransferase activity"/>
    <property type="evidence" value="ECO:0007669"/>
    <property type="project" value="UniProtKB-UniRule"/>
</dbReference>
<dbReference type="GO" id="GO:0000287">
    <property type="term" value="F:magnesium ion binding"/>
    <property type="evidence" value="ECO:0007669"/>
    <property type="project" value="UniProtKB-UniRule"/>
</dbReference>
<dbReference type="GO" id="GO:0003977">
    <property type="term" value="F:UDP-N-acetylglucosamine diphosphorylase activity"/>
    <property type="evidence" value="ECO:0007669"/>
    <property type="project" value="UniProtKB-UniRule"/>
</dbReference>
<dbReference type="GO" id="GO:0000902">
    <property type="term" value="P:cell morphogenesis"/>
    <property type="evidence" value="ECO:0007669"/>
    <property type="project" value="UniProtKB-UniRule"/>
</dbReference>
<dbReference type="GO" id="GO:0071555">
    <property type="term" value="P:cell wall organization"/>
    <property type="evidence" value="ECO:0007669"/>
    <property type="project" value="UniProtKB-KW"/>
</dbReference>
<dbReference type="GO" id="GO:0009245">
    <property type="term" value="P:lipid A biosynthetic process"/>
    <property type="evidence" value="ECO:0007669"/>
    <property type="project" value="UniProtKB-UniRule"/>
</dbReference>
<dbReference type="GO" id="GO:0009252">
    <property type="term" value="P:peptidoglycan biosynthetic process"/>
    <property type="evidence" value="ECO:0007669"/>
    <property type="project" value="UniProtKB-UniRule"/>
</dbReference>
<dbReference type="GO" id="GO:0008360">
    <property type="term" value="P:regulation of cell shape"/>
    <property type="evidence" value="ECO:0007669"/>
    <property type="project" value="UniProtKB-KW"/>
</dbReference>
<dbReference type="GO" id="GO:0006048">
    <property type="term" value="P:UDP-N-acetylglucosamine biosynthetic process"/>
    <property type="evidence" value="ECO:0007669"/>
    <property type="project" value="UniProtKB-UniPathway"/>
</dbReference>
<dbReference type="CDD" id="cd02540">
    <property type="entry name" value="GT2_GlmU_N_bac"/>
    <property type="match status" value="1"/>
</dbReference>
<dbReference type="CDD" id="cd03353">
    <property type="entry name" value="LbH_GlmU_C"/>
    <property type="match status" value="1"/>
</dbReference>
<dbReference type="Gene3D" id="2.160.10.10">
    <property type="entry name" value="Hexapeptide repeat proteins"/>
    <property type="match status" value="1"/>
</dbReference>
<dbReference type="Gene3D" id="3.90.550.10">
    <property type="entry name" value="Spore Coat Polysaccharide Biosynthesis Protein SpsA, Chain A"/>
    <property type="match status" value="1"/>
</dbReference>
<dbReference type="HAMAP" id="MF_01631">
    <property type="entry name" value="GlmU"/>
    <property type="match status" value="1"/>
</dbReference>
<dbReference type="InterPro" id="IPR005882">
    <property type="entry name" value="Bifunctional_GlmU"/>
</dbReference>
<dbReference type="InterPro" id="IPR050065">
    <property type="entry name" value="GlmU-like"/>
</dbReference>
<dbReference type="InterPro" id="IPR038009">
    <property type="entry name" value="GlmU_C_LbH"/>
</dbReference>
<dbReference type="InterPro" id="IPR001451">
    <property type="entry name" value="Hexapep"/>
</dbReference>
<dbReference type="InterPro" id="IPR025877">
    <property type="entry name" value="MobA-like_NTP_Trfase"/>
</dbReference>
<dbReference type="InterPro" id="IPR029044">
    <property type="entry name" value="Nucleotide-diphossugar_trans"/>
</dbReference>
<dbReference type="InterPro" id="IPR011004">
    <property type="entry name" value="Trimer_LpxA-like_sf"/>
</dbReference>
<dbReference type="NCBIfam" id="TIGR01173">
    <property type="entry name" value="glmU"/>
    <property type="match status" value="1"/>
</dbReference>
<dbReference type="NCBIfam" id="NF010932">
    <property type="entry name" value="PRK14352.1"/>
    <property type="match status" value="1"/>
</dbReference>
<dbReference type="PANTHER" id="PTHR43584:SF3">
    <property type="entry name" value="BIFUNCTIONAL PROTEIN GLMU"/>
    <property type="match status" value="1"/>
</dbReference>
<dbReference type="PANTHER" id="PTHR43584">
    <property type="entry name" value="NUCLEOTIDYL TRANSFERASE"/>
    <property type="match status" value="1"/>
</dbReference>
<dbReference type="Pfam" id="PF00132">
    <property type="entry name" value="Hexapep"/>
    <property type="match status" value="1"/>
</dbReference>
<dbReference type="Pfam" id="PF12804">
    <property type="entry name" value="NTP_transf_3"/>
    <property type="match status" value="1"/>
</dbReference>
<dbReference type="SUPFAM" id="SSF53448">
    <property type="entry name" value="Nucleotide-diphospho-sugar transferases"/>
    <property type="match status" value="1"/>
</dbReference>
<dbReference type="SUPFAM" id="SSF51161">
    <property type="entry name" value="Trimeric LpxA-like enzymes"/>
    <property type="match status" value="1"/>
</dbReference>
<name>GLMU_MYCSK</name>